<feature type="chain" id="PRO_0000097594" description="Spindle assembly abnormal protein 5">
    <location>
        <begin position="1"/>
        <end position="403"/>
    </location>
</feature>
<feature type="region of interest" description="Disordered" evidence="3">
    <location>
        <begin position="24"/>
        <end position="79"/>
    </location>
</feature>
<feature type="region of interest" description="Disordered" evidence="3">
    <location>
        <begin position="96"/>
        <end position="127"/>
    </location>
</feature>
<feature type="region of interest" description="Disordered" evidence="3">
    <location>
        <begin position="174"/>
        <end position="205"/>
    </location>
</feature>
<feature type="region of interest" description="Disordered" evidence="3">
    <location>
        <begin position="255"/>
        <end position="276"/>
    </location>
</feature>
<feature type="region of interest" description="Disordered" evidence="3">
    <location>
        <begin position="302"/>
        <end position="325"/>
    </location>
</feature>
<feature type="region of interest" description="Disordered" evidence="3">
    <location>
        <begin position="355"/>
        <end position="403"/>
    </location>
</feature>
<feature type="coiled-coil region" evidence="2">
    <location>
        <begin position="128"/>
        <end position="163"/>
    </location>
</feature>
<feature type="compositionally biased region" description="Basic and acidic residues" evidence="3">
    <location>
        <begin position="116"/>
        <end position="127"/>
    </location>
</feature>
<feature type="compositionally biased region" description="Basic and acidic residues" evidence="3">
    <location>
        <begin position="177"/>
        <end position="194"/>
    </location>
</feature>
<feature type="compositionally biased region" description="Basic and acidic residues" evidence="3">
    <location>
        <begin position="305"/>
        <end position="321"/>
    </location>
</feature>
<feature type="compositionally biased region" description="Acidic residues" evidence="3">
    <location>
        <begin position="360"/>
        <end position="369"/>
    </location>
</feature>
<feature type="compositionally biased region" description="Basic and acidic residues" evidence="3">
    <location>
        <begin position="379"/>
        <end position="403"/>
    </location>
</feature>
<protein>
    <recommendedName>
        <fullName>Spindle assembly abnormal protein 5</fullName>
    </recommendedName>
</protein>
<comment type="function">
    <text evidence="1">Required for centrosome duplication. Essential for daughter-centriole formation. Requires both maternal and partenal expression, suggesting that it regulates centriole duplication during both spermatogenesis and early embryogenesis (By similarity).</text>
</comment>
<comment type="subunit">
    <text evidence="1">Interacts with sas-6 via its coiled coil domain.</text>
</comment>
<comment type="subcellular location">
    <subcellularLocation>
        <location evidence="1">Cytoplasm</location>
    </subcellularLocation>
    <subcellularLocation>
        <location evidence="1">Cytoplasm</location>
        <location evidence="1">Cytoskeleton</location>
        <location evidence="1">Microtubule organizing center</location>
        <location evidence="1">Centrosome</location>
        <location evidence="1">Centriole</location>
    </subcellularLocation>
    <text evidence="1">Localizes to centrioles. Shuttles between centrioles and the cytoplasm throughout the cell cycle. Requires zyg-1 for centriole localization (By similarity).</text>
</comment>
<accession>Q60M48</accession>
<accession>A8Y485</accession>
<evidence type="ECO:0000250" key="1"/>
<evidence type="ECO:0000255" key="2"/>
<evidence type="ECO:0000256" key="3">
    <source>
        <dbReference type="SAM" id="MobiDB-lite"/>
    </source>
</evidence>
<keyword id="KW-0131">Cell cycle</keyword>
<keyword id="KW-0175">Coiled coil</keyword>
<keyword id="KW-0963">Cytoplasm</keyword>
<keyword id="KW-0206">Cytoskeleton</keyword>
<keyword id="KW-0217">Developmental protein</keyword>
<keyword id="KW-1185">Reference proteome</keyword>
<proteinExistence type="inferred from homology"/>
<name>SAS5_CAEBR</name>
<dbReference type="EMBL" id="HE601533">
    <property type="protein sequence ID" value="CAP39705.3"/>
    <property type="molecule type" value="Genomic_DNA"/>
</dbReference>
<dbReference type="SMR" id="Q60M48"/>
<dbReference type="FunCoup" id="Q60M48">
    <property type="interactions" value="407"/>
</dbReference>
<dbReference type="STRING" id="6238.Q60M48"/>
<dbReference type="EnsemblMetazoa" id="CBG23306.1">
    <property type="protein sequence ID" value="CBG23306.1"/>
    <property type="gene ID" value="WBGene00041682"/>
</dbReference>
<dbReference type="KEGG" id="cbr:CBG_23306"/>
<dbReference type="CTD" id="8578599"/>
<dbReference type="WormBase" id="CBG23306">
    <property type="protein sequence ID" value="CBP12393"/>
    <property type="gene ID" value="WBGene00041682"/>
    <property type="gene designation" value="Cbr-sas-5"/>
</dbReference>
<dbReference type="eggNOG" id="ENOG502SXK9">
    <property type="taxonomic scope" value="Eukaryota"/>
</dbReference>
<dbReference type="HOGENOM" id="CLU_057198_0_0_1"/>
<dbReference type="InParanoid" id="Q60M48"/>
<dbReference type="OMA" id="EDWRDVM"/>
<dbReference type="Proteomes" id="UP000008549">
    <property type="component" value="Unassembled WGS sequence"/>
</dbReference>
<dbReference type="GO" id="GO:0005814">
    <property type="term" value="C:centriole"/>
    <property type="evidence" value="ECO:0007669"/>
    <property type="project" value="UniProtKB-SubCell"/>
</dbReference>
<dbReference type="GO" id="GO:0005737">
    <property type="term" value="C:cytoplasm"/>
    <property type="evidence" value="ECO:0007669"/>
    <property type="project" value="UniProtKB-SubCell"/>
</dbReference>
<dbReference type="GO" id="GO:0007099">
    <property type="term" value="P:centriole replication"/>
    <property type="evidence" value="ECO:0007669"/>
    <property type="project" value="EnsemblMetazoa"/>
</dbReference>
<dbReference type="InterPro" id="IPR048594">
    <property type="entry name" value="Sas-5-like_implico"/>
</dbReference>
<dbReference type="Pfam" id="PF21518">
    <property type="entry name" value="Sas-5-like_implico"/>
    <property type="match status" value="1"/>
</dbReference>
<reference key="1">
    <citation type="journal article" date="2003" name="PLoS Biol.">
        <title>The genome sequence of Caenorhabditis briggsae: a platform for comparative genomics.</title>
        <authorList>
            <person name="Stein L.D."/>
            <person name="Bao Z."/>
            <person name="Blasiar D."/>
            <person name="Blumenthal T."/>
            <person name="Brent M.R."/>
            <person name="Chen N."/>
            <person name="Chinwalla A."/>
            <person name="Clarke L."/>
            <person name="Clee C."/>
            <person name="Coghlan A."/>
            <person name="Coulson A."/>
            <person name="D'Eustachio P."/>
            <person name="Fitch D.H.A."/>
            <person name="Fulton L.A."/>
            <person name="Fulton R.E."/>
            <person name="Griffiths-Jones S."/>
            <person name="Harris T.W."/>
            <person name="Hillier L.W."/>
            <person name="Kamath R."/>
            <person name="Kuwabara P.E."/>
            <person name="Mardis E.R."/>
            <person name="Marra M.A."/>
            <person name="Miner T.L."/>
            <person name="Minx P."/>
            <person name="Mullikin J.C."/>
            <person name="Plumb R.W."/>
            <person name="Rogers J."/>
            <person name="Schein J.E."/>
            <person name="Sohrmann M."/>
            <person name="Spieth J."/>
            <person name="Stajich J.E."/>
            <person name="Wei C."/>
            <person name="Willey D."/>
            <person name="Wilson R.K."/>
            <person name="Durbin R.M."/>
            <person name="Waterston R.H."/>
        </authorList>
    </citation>
    <scope>NUCLEOTIDE SEQUENCE [LARGE SCALE GENOMIC DNA]</scope>
    <source>
        <strain>AF16</strain>
    </source>
</reference>
<gene>
    <name type="primary">sas-5</name>
    <name type="ORF">CBG23306</name>
</gene>
<sequence>MSNYDRVPCSIAIPNQQVEIQQQPRVFEDQESPVKTKVQQPPPEQVRVPPTVIGATATAKKKSCLSTTSSRKEPPAHPALRRKTVAFGRTVNVSQTVEGTSRHTKKAIASPSQNHRMTEENQEENWRDVMKNEFEVMRKEMQEEATKKQEELNAQNLNKMQEMMSQFFQQITVAKPSAEESQDREKENWYEQSRHARQQKPANKIAKAREIIKREGSIPPEALPILEQRIRTDPMFRQQIDNVLADAECDANRAAYSPLPPLSPPSGRYANGSSGNPALMRETLTVERSIRYDNGLSSIDSRQWTSERNDNRTHDNYRPYEPDPQLQSMYQKGQSVSYYPSEAVGKAHRNNRLEYHVEEVPEYEEEETEVGGRGRGRKYHEPMETESAAERERRIREKYSRRK</sequence>
<organism>
    <name type="scientific">Caenorhabditis briggsae</name>
    <dbReference type="NCBI Taxonomy" id="6238"/>
    <lineage>
        <taxon>Eukaryota</taxon>
        <taxon>Metazoa</taxon>
        <taxon>Ecdysozoa</taxon>
        <taxon>Nematoda</taxon>
        <taxon>Chromadorea</taxon>
        <taxon>Rhabditida</taxon>
        <taxon>Rhabditina</taxon>
        <taxon>Rhabditomorpha</taxon>
        <taxon>Rhabditoidea</taxon>
        <taxon>Rhabditidae</taxon>
        <taxon>Peloderinae</taxon>
        <taxon>Caenorhabditis</taxon>
    </lineage>
</organism>